<name>APC5_HUMAN</name>
<sequence>MASVHESLYFNPMMTNGVVHANVFGIKDWVTPYKIAVLVLLNEMSRTGEGAVSLMERRRLNQLLLPLLQGPDITLSKLYKLIEESCPQLANSVQIRIKLMAEGELKDMEQFFDDLSDSFSGTEPEVHKTSVVGLFLRHMILAYSKLSFSQVFKLYTALQQYFQNGEKKTVEDADMELTSRDEGERKMEKEELDVSVREEEVSCSGPLSQKQAEFFLSQQASLLKNDETKALTPASLQKELNNLLKFNPDFAEAHYLSYLNNLRVQDVFSSTHSLLHYFDRLILTGAESKSNGEEGYGRSLRYAALNLAALHCRFGHYQQAELALQEAIRIAQESNDHVCLQHCLSWLYVLGQKRSDSYVLLEHSVKKAVHFGLPYLASLGIQSLVQQRAFAGKTANKLMDALKDSDLLHWKHSLSELIDISIAQKTAIWRLYGRSTMALQQAQMLLSMNSLEAVNAGVQQNNTESFAVALCHLAELHAEQGCFAAASEVLKHLKERFPPNSQHAQLWMLCDQKIQFDRAMNDGKYHLADSLVTGITALNSIEGVYRKAVVLQAQNQMSEAHKLLQKLLVHCQKLKNTEMVISVLLSVAELYWRSSSPTIALPMLLQALALSKEYRLQYLASETVLNLAFAQLILGIPEQALSLLHMAIEPILADGAILDKGRAMFLVAKCQVASAASYDQPKKAEALEAAIENLNEAKNYFAKVDCKERIRDVVYFQARLYHTLGKTQERNRCAMLFRQLHQELPSHGVPLINHL</sequence>
<proteinExistence type="evidence at protein level"/>
<keyword id="KW-0002">3D-structure</keyword>
<keyword id="KW-0025">Alternative splicing</keyword>
<keyword id="KW-0131">Cell cycle</keyword>
<keyword id="KW-0132">Cell division</keyword>
<keyword id="KW-0963">Cytoplasm</keyword>
<keyword id="KW-0206">Cytoskeleton</keyword>
<keyword id="KW-0498">Mitosis</keyword>
<keyword id="KW-0539">Nucleus</keyword>
<keyword id="KW-0597">Phosphoprotein</keyword>
<keyword id="KW-1267">Proteomics identification</keyword>
<keyword id="KW-1185">Reference proteome</keyword>
<keyword id="KW-0677">Repeat</keyword>
<keyword id="KW-0802">TPR repeat</keyword>
<keyword id="KW-0833">Ubl conjugation pathway</keyword>
<protein>
    <recommendedName>
        <fullName>Anaphase-promoting complex subunit 5</fullName>
        <shortName>APC5</shortName>
    </recommendedName>
    <alternativeName>
        <fullName>Cyclosome subunit 5</fullName>
    </alternativeName>
</protein>
<accession>Q9UJX4</accession>
<accession>E9PFB2</accession>
<accession>Q8N4H7</accession>
<accession>Q9BQD4</accession>
<organism>
    <name type="scientific">Homo sapiens</name>
    <name type="common">Human</name>
    <dbReference type="NCBI Taxonomy" id="9606"/>
    <lineage>
        <taxon>Eukaryota</taxon>
        <taxon>Metazoa</taxon>
        <taxon>Chordata</taxon>
        <taxon>Craniata</taxon>
        <taxon>Vertebrata</taxon>
        <taxon>Euteleostomi</taxon>
        <taxon>Mammalia</taxon>
        <taxon>Eutheria</taxon>
        <taxon>Euarchontoglires</taxon>
        <taxon>Primates</taxon>
        <taxon>Haplorrhini</taxon>
        <taxon>Catarrhini</taxon>
        <taxon>Hominidae</taxon>
        <taxon>Homo</taxon>
    </lineage>
</organism>
<gene>
    <name type="primary">ANAPC5</name>
    <name type="synonym">APC5</name>
</gene>
<reference key="1">
    <citation type="journal article" date="1998" name="Science">
        <title>Identification of a cullin homology region in a subunit of the anaphase-promoting complex.</title>
        <authorList>
            <person name="Yu H."/>
            <person name="Peters J.-M."/>
            <person name="King R.W."/>
            <person name="Page A.M."/>
            <person name="Hieter P."/>
            <person name="Kirschner M.W."/>
        </authorList>
    </citation>
    <scope>NUCLEOTIDE SEQUENCE [MRNA] (ISOFORM 1)</scope>
    <scope>SUBUNIT</scope>
</reference>
<reference key="2">
    <citation type="journal article" date="2004" name="Nat. Genet.">
        <title>Complete sequencing and characterization of 21,243 full-length human cDNAs.</title>
        <authorList>
            <person name="Ota T."/>
            <person name="Suzuki Y."/>
            <person name="Nishikawa T."/>
            <person name="Otsuki T."/>
            <person name="Sugiyama T."/>
            <person name="Irie R."/>
            <person name="Wakamatsu A."/>
            <person name="Hayashi K."/>
            <person name="Sato H."/>
            <person name="Nagai K."/>
            <person name="Kimura K."/>
            <person name="Makita H."/>
            <person name="Sekine M."/>
            <person name="Obayashi M."/>
            <person name="Nishi T."/>
            <person name="Shibahara T."/>
            <person name="Tanaka T."/>
            <person name="Ishii S."/>
            <person name="Yamamoto J."/>
            <person name="Saito K."/>
            <person name="Kawai Y."/>
            <person name="Isono Y."/>
            <person name="Nakamura Y."/>
            <person name="Nagahari K."/>
            <person name="Murakami K."/>
            <person name="Yasuda T."/>
            <person name="Iwayanagi T."/>
            <person name="Wagatsuma M."/>
            <person name="Shiratori A."/>
            <person name="Sudo H."/>
            <person name="Hosoiri T."/>
            <person name="Kaku Y."/>
            <person name="Kodaira H."/>
            <person name="Kondo H."/>
            <person name="Sugawara M."/>
            <person name="Takahashi M."/>
            <person name="Kanda K."/>
            <person name="Yokoi T."/>
            <person name="Furuya T."/>
            <person name="Kikkawa E."/>
            <person name="Omura Y."/>
            <person name="Abe K."/>
            <person name="Kamihara K."/>
            <person name="Katsuta N."/>
            <person name="Sato K."/>
            <person name="Tanikawa M."/>
            <person name="Yamazaki M."/>
            <person name="Ninomiya K."/>
            <person name="Ishibashi T."/>
            <person name="Yamashita H."/>
            <person name="Murakawa K."/>
            <person name="Fujimori K."/>
            <person name="Tanai H."/>
            <person name="Kimata M."/>
            <person name="Watanabe M."/>
            <person name="Hiraoka S."/>
            <person name="Chiba Y."/>
            <person name="Ishida S."/>
            <person name="Ono Y."/>
            <person name="Takiguchi S."/>
            <person name="Watanabe S."/>
            <person name="Yosida M."/>
            <person name="Hotuta T."/>
            <person name="Kusano J."/>
            <person name="Kanehori K."/>
            <person name="Takahashi-Fujii A."/>
            <person name="Hara H."/>
            <person name="Tanase T.-O."/>
            <person name="Nomura Y."/>
            <person name="Togiya S."/>
            <person name="Komai F."/>
            <person name="Hara R."/>
            <person name="Takeuchi K."/>
            <person name="Arita M."/>
            <person name="Imose N."/>
            <person name="Musashino K."/>
            <person name="Yuuki H."/>
            <person name="Oshima A."/>
            <person name="Sasaki N."/>
            <person name="Aotsuka S."/>
            <person name="Yoshikawa Y."/>
            <person name="Matsunawa H."/>
            <person name="Ichihara T."/>
            <person name="Shiohata N."/>
            <person name="Sano S."/>
            <person name="Moriya S."/>
            <person name="Momiyama H."/>
            <person name="Satoh N."/>
            <person name="Takami S."/>
            <person name="Terashima Y."/>
            <person name="Suzuki O."/>
            <person name="Nakagawa S."/>
            <person name="Senoh A."/>
            <person name="Mizoguchi H."/>
            <person name="Goto Y."/>
            <person name="Shimizu F."/>
            <person name="Wakebe H."/>
            <person name="Hishigaki H."/>
            <person name="Watanabe T."/>
            <person name="Sugiyama A."/>
            <person name="Takemoto M."/>
            <person name="Kawakami B."/>
            <person name="Yamazaki M."/>
            <person name="Watanabe K."/>
            <person name="Kumagai A."/>
            <person name="Itakura S."/>
            <person name="Fukuzumi Y."/>
            <person name="Fujimori Y."/>
            <person name="Komiyama M."/>
            <person name="Tashiro H."/>
            <person name="Tanigami A."/>
            <person name="Fujiwara T."/>
            <person name="Ono T."/>
            <person name="Yamada K."/>
            <person name="Fujii Y."/>
            <person name="Ozaki K."/>
            <person name="Hirao M."/>
            <person name="Ohmori Y."/>
            <person name="Kawabata A."/>
            <person name="Hikiji T."/>
            <person name="Kobatake N."/>
            <person name="Inagaki H."/>
            <person name="Ikema Y."/>
            <person name="Okamoto S."/>
            <person name="Okitani R."/>
            <person name="Kawakami T."/>
            <person name="Noguchi S."/>
            <person name="Itoh T."/>
            <person name="Shigeta K."/>
            <person name="Senba T."/>
            <person name="Matsumura K."/>
            <person name="Nakajima Y."/>
            <person name="Mizuno T."/>
            <person name="Morinaga M."/>
            <person name="Sasaki M."/>
            <person name="Togashi T."/>
            <person name="Oyama M."/>
            <person name="Hata H."/>
            <person name="Watanabe M."/>
            <person name="Komatsu T."/>
            <person name="Mizushima-Sugano J."/>
            <person name="Satoh T."/>
            <person name="Shirai Y."/>
            <person name="Takahashi Y."/>
            <person name="Nakagawa K."/>
            <person name="Okumura K."/>
            <person name="Nagase T."/>
            <person name="Nomura N."/>
            <person name="Kikuchi H."/>
            <person name="Masuho Y."/>
            <person name="Yamashita R."/>
            <person name="Nakai K."/>
            <person name="Yada T."/>
            <person name="Nakamura Y."/>
            <person name="Ohara O."/>
            <person name="Isogai T."/>
            <person name="Sugano S."/>
        </authorList>
    </citation>
    <scope>NUCLEOTIDE SEQUENCE [LARGE SCALE MRNA] (ISOFORM 3)</scope>
    <source>
        <tissue>Hepatoma</tissue>
    </source>
</reference>
<reference key="3">
    <citation type="journal article" date="2007" name="BMC Genomics">
        <title>The full-ORF clone resource of the German cDNA consortium.</title>
        <authorList>
            <person name="Bechtel S."/>
            <person name="Rosenfelder H."/>
            <person name="Duda A."/>
            <person name="Schmidt C.P."/>
            <person name="Ernst U."/>
            <person name="Wellenreuther R."/>
            <person name="Mehrle A."/>
            <person name="Schuster C."/>
            <person name="Bahr A."/>
            <person name="Bloecker H."/>
            <person name="Heubner D."/>
            <person name="Hoerlein A."/>
            <person name="Michel G."/>
            <person name="Wedler H."/>
            <person name="Koehrer K."/>
            <person name="Ottenwaelder B."/>
            <person name="Poustka A."/>
            <person name="Wiemann S."/>
            <person name="Schupp I."/>
        </authorList>
    </citation>
    <scope>NUCLEOTIDE SEQUENCE [LARGE SCALE MRNA] (ISOFORM 2)</scope>
    <source>
        <tissue>Esophagus</tissue>
    </source>
</reference>
<reference key="4">
    <citation type="journal article" date="2006" name="Nature">
        <title>The finished DNA sequence of human chromosome 12.</title>
        <authorList>
            <person name="Scherer S.E."/>
            <person name="Muzny D.M."/>
            <person name="Buhay C.J."/>
            <person name="Chen R."/>
            <person name="Cree A."/>
            <person name="Ding Y."/>
            <person name="Dugan-Rocha S."/>
            <person name="Gill R."/>
            <person name="Gunaratne P."/>
            <person name="Harris R.A."/>
            <person name="Hawes A.C."/>
            <person name="Hernandez J."/>
            <person name="Hodgson A.V."/>
            <person name="Hume J."/>
            <person name="Jackson A."/>
            <person name="Khan Z.M."/>
            <person name="Kovar-Smith C."/>
            <person name="Lewis L.R."/>
            <person name="Lozado R.J."/>
            <person name="Metzker M.L."/>
            <person name="Milosavljevic A."/>
            <person name="Miner G.R."/>
            <person name="Montgomery K.T."/>
            <person name="Morgan M.B."/>
            <person name="Nazareth L.V."/>
            <person name="Scott G."/>
            <person name="Sodergren E."/>
            <person name="Song X.-Z."/>
            <person name="Steffen D."/>
            <person name="Lovering R.C."/>
            <person name="Wheeler D.A."/>
            <person name="Worley K.C."/>
            <person name="Yuan Y."/>
            <person name="Zhang Z."/>
            <person name="Adams C.Q."/>
            <person name="Ansari-Lari M.A."/>
            <person name="Ayele M."/>
            <person name="Brown M.J."/>
            <person name="Chen G."/>
            <person name="Chen Z."/>
            <person name="Clerc-Blankenburg K.P."/>
            <person name="Davis C."/>
            <person name="Delgado O."/>
            <person name="Dinh H.H."/>
            <person name="Draper H."/>
            <person name="Gonzalez-Garay M.L."/>
            <person name="Havlak P."/>
            <person name="Jackson L.R."/>
            <person name="Jacob L.S."/>
            <person name="Kelly S.H."/>
            <person name="Li L."/>
            <person name="Li Z."/>
            <person name="Liu J."/>
            <person name="Liu W."/>
            <person name="Lu J."/>
            <person name="Maheshwari M."/>
            <person name="Nguyen B.-V."/>
            <person name="Okwuonu G.O."/>
            <person name="Pasternak S."/>
            <person name="Perez L.M."/>
            <person name="Plopper F.J.H."/>
            <person name="Santibanez J."/>
            <person name="Shen H."/>
            <person name="Tabor P.E."/>
            <person name="Verduzco D."/>
            <person name="Waldron L."/>
            <person name="Wang Q."/>
            <person name="Williams G.A."/>
            <person name="Zhang J."/>
            <person name="Zhou J."/>
            <person name="Allen C.C."/>
            <person name="Amin A.G."/>
            <person name="Anyalebechi V."/>
            <person name="Bailey M."/>
            <person name="Barbaria J.A."/>
            <person name="Bimage K.E."/>
            <person name="Bryant N.P."/>
            <person name="Burch P.E."/>
            <person name="Burkett C.E."/>
            <person name="Burrell K.L."/>
            <person name="Calderon E."/>
            <person name="Cardenas V."/>
            <person name="Carter K."/>
            <person name="Casias K."/>
            <person name="Cavazos I."/>
            <person name="Cavazos S.R."/>
            <person name="Ceasar H."/>
            <person name="Chacko J."/>
            <person name="Chan S.N."/>
            <person name="Chavez D."/>
            <person name="Christopoulos C."/>
            <person name="Chu J."/>
            <person name="Cockrell R."/>
            <person name="Cox C.D."/>
            <person name="Dang M."/>
            <person name="Dathorne S.R."/>
            <person name="David R."/>
            <person name="Davis C.M."/>
            <person name="Davy-Carroll L."/>
            <person name="Deshazo D.R."/>
            <person name="Donlin J.E."/>
            <person name="D'Souza L."/>
            <person name="Eaves K.A."/>
            <person name="Egan A."/>
            <person name="Emery-Cohen A.J."/>
            <person name="Escotto M."/>
            <person name="Flagg N."/>
            <person name="Forbes L.D."/>
            <person name="Gabisi A.M."/>
            <person name="Garza M."/>
            <person name="Hamilton C."/>
            <person name="Henderson N."/>
            <person name="Hernandez O."/>
            <person name="Hines S."/>
            <person name="Hogues M.E."/>
            <person name="Huang M."/>
            <person name="Idlebird D.G."/>
            <person name="Johnson R."/>
            <person name="Jolivet A."/>
            <person name="Jones S."/>
            <person name="Kagan R."/>
            <person name="King L.M."/>
            <person name="Leal B."/>
            <person name="Lebow H."/>
            <person name="Lee S."/>
            <person name="LeVan J.M."/>
            <person name="Lewis L.C."/>
            <person name="London P."/>
            <person name="Lorensuhewa L.M."/>
            <person name="Loulseged H."/>
            <person name="Lovett D.A."/>
            <person name="Lucier A."/>
            <person name="Lucier R.L."/>
            <person name="Ma J."/>
            <person name="Madu R.C."/>
            <person name="Mapua P."/>
            <person name="Martindale A.D."/>
            <person name="Martinez E."/>
            <person name="Massey E."/>
            <person name="Mawhiney S."/>
            <person name="Meador M.G."/>
            <person name="Mendez S."/>
            <person name="Mercado C."/>
            <person name="Mercado I.C."/>
            <person name="Merritt C.E."/>
            <person name="Miner Z.L."/>
            <person name="Minja E."/>
            <person name="Mitchell T."/>
            <person name="Mohabbat F."/>
            <person name="Mohabbat K."/>
            <person name="Montgomery B."/>
            <person name="Moore N."/>
            <person name="Morris S."/>
            <person name="Munidasa M."/>
            <person name="Ngo R.N."/>
            <person name="Nguyen N.B."/>
            <person name="Nickerson E."/>
            <person name="Nwaokelemeh O.O."/>
            <person name="Nwokenkwo S."/>
            <person name="Obregon M."/>
            <person name="Oguh M."/>
            <person name="Oragunye N."/>
            <person name="Oviedo R.J."/>
            <person name="Parish B.J."/>
            <person name="Parker D.N."/>
            <person name="Parrish J."/>
            <person name="Parks K.L."/>
            <person name="Paul H.A."/>
            <person name="Payton B.A."/>
            <person name="Perez A."/>
            <person name="Perrin W."/>
            <person name="Pickens A."/>
            <person name="Primus E.L."/>
            <person name="Pu L.-L."/>
            <person name="Puazo M."/>
            <person name="Quiles M.M."/>
            <person name="Quiroz J.B."/>
            <person name="Rabata D."/>
            <person name="Reeves K."/>
            <person name="Ruiz S.J."/>
            <person name="Shao H."/>
            <person name="Sisson I."/>
            <person name="Sonaike T."/>
            <person name="Sorelle R.P."/>
            <person name="Sutton A.E."/>
            <person name="Svatek A.F."/>
            <person name="Svetz L.A."/>
            <person name="Tamerisa K.S."/>
            <person name="Taylor T.R."/>
            <person name="Teague B."/>
            <person name="Thomas N."/>
            <person name="Thorn R.D."/>
            <person name="Trejos Z.Y."/>
            <person name="Trevino B.K."/>
            <person name="Ukegbu O.N."/>
            <person name="Urban J.B."/>
            <person name="Vasquez L.I."/>
            <person name="Vera V.A."/>
            <person name="Villasana D.M."/>
            <person name="Wang L."/>
            <person name="Ward-Moore S."/>
            <person name="Warren J.T."/>
            <person name="Wei X."/>
            <person name="White F."/>
            <person name="Williamson A.L."/>
            <person name="Wleczyk R."/>
            <person name="Wooden H.S."/>
            <person name="Wooden S.H."/>
            <person name="Yen J."/>
            <person name="Yoon L."/>
            <person name="Yoon V."/>
            <person name="Zorrilla S.E."/>
            <person name="Nelson D."/>
            <person name="Kucherlapati R."/>
            <person name="Weinstock G."/>
            <person name="Gibbs R.A."/>
        </authorList>
    </citation>
    <scope>NUCLEOTIDE SEQUENCE [LARGE SCALE GENOMIC DNA]</scope>
</reference>
<reference key="5">
    <citation type="journal article" date="2004" name="Genome Res.">
        <title>The status, quality, and expansion of the NIH full-length cDNA project: the Mammalian Gene Collection (MGC).</title>
        <authorList>
            <consortium name="The MGC Project Team"/>
        </authorList>
    </citation>
    <scope>NUCLEOTIDE SEQUENCE [LARGE SCALE MRNA] (ISOFORM 1)</scope>
    <source>
        <tissue>Brain</tissue>
        <tissue>Cervix</tissue>
        <tissue>Lung</tissue>
    </source>
</reference>
<reference key="6">
    <citation type="journal article" date="2003" name="EMBO J.">
        <title>Mitotic regulation of the human anaphase-promoting complex by phosphorylation.</title>
        <authorList>
            <person name="Kraft C."/>
            <person name="Herzog F."/>
            <person name="Gieffers C."/>
            <person name="Mechtler K."/>
            <person name="Hagting A."/>
            <person name="Pines J."/>
            <person name="Peters J.-M."/>
        </authorList>
    </citation>
    <scope>PHOSPHORYLATION AT SER-195</scope>
</reference>
<reference key="7">
    <citation type="journal article" date="2008" name="Cell">
        <title>Mechanism of ubiquitin-chain formation by the human anaphase-promoting complex.</title>
        <authorList>
            <person name="Jin L."/>
            <person name="Williamson A."/>
            <person name="Banerjee S."/>
            <person name="Philipp I."/>
            <person name="Rape M."/>
        </authorList>
    </citation>
    <scope>FUNCTION OF THE APC/C</scope>
</reference>
<reference key="8">
    <citation type="journal article" date="2008" name="J. Cell Sci.">
        <title>EML3 is a nuclear microtubule-binding protein required for the correct alignment of chromosomes in metaphase.</title>
        <authorList>
            <person name="Tegha-Dunghu J."/>
            <person name="Neumann B."/>
            <person name="Reber S."/>
            <person name="Krause R."/>
            <person name="Erfle H."/>
            <person name="Walter T."/>
            <person name="Held M."/>
            <person name="Rogers P."/>
            <person name="Hupfeld K."/>
            <person name="Ruppert T."/>
            <person name="Ellenberg J."/>
            <person name="Gruss O.J."/>
        </authorList>
    </citation>
    <scope>SUBCELLULAR LOCATION</scope>
</reference>
<reference key="9">
    <citation type="journal article" date="2009" name="Sci. Signal.">
        <title>Quantitative phosphoproteomic analysis of T cell receptor signaling reveals system-wide modulation of protein-protein interactions.</title>
        <authorList>
            <person name="Mayya V."/>
            <person name="Lundgren D.H."/>
            <person name="Hwang S.-I."/>
            <person name="Rezaul K."/>
            <person name="Wu L."/>
            <person name="Eng J.K."/>
            <person name="Rodionov V."/>
            <person name="Han D.K."/>
        </authorList>
    </citation>
    <scope>IDENTIFICATION BY MASS SPECTROMETRY [LARGE SCALE ANALYSIS]</scope>
    <source>
        <tissue>Leukemic T-cell</tissue>
    </source>
</reference>
<reference key="10">
    <citation type="journal article" date="2011" name="BMC Syst. Biol.">
        <title>Initial characterization of the human central proteome.</title>
        <authorList>
            <person name="Burkard T.R."/>
            <person name="Planyavsky M."/>
            <person name="Kaupe I."/>
            <person name="Breitwieser F.P."/>
            <person name="Buerckstuemmer T."/>
            <person name="Bennett K.L."/>
            <person name="Superti-Furga G."/>
            <person name="Colinge J."/>
        </authorList>
    </citation>
    <scope>IDENTIFICATION BY MASS SPECTROMETRY [LARGE SCALE ANALYSIS]</scope>
</reference>
<reference key="11">
    <citation type="journal article" date="2011" name="Nature">
        <title>Structural basis for the subunit assembly of the anaphase-promoting complex.</title>
        <authorList>
            <person name="Schreiber A."/>
            <person name="Stengel F."/>
            <person name="Zhang Z."/>
            <person name="Enchev R.I."/>
            <person name="Kong E.H."/>
            <person name="Morris E.P."/>
            <person name="Robinson C.V."/>
            <person name="da Fonseca P.C."/>
            <person name="Barford D."/>
        </authorList>
    </citation>
    <scope>TPR REPEATS</scope>
</reference>
<reference key="12">
    <citation type="journal article" date="2013" name="J. Proteome Res.">
        <title>Toward a comprehensive characterization of a human cancer cell phosphoproteome.</title>
        <authorList>
            <person name="Zhou H."/>
            <person name="Di Palma S."/>
            <person name="Preisinger C."/>
            <person name="Peng M."/>
            <person name="Polat A.N."/>
            <person name="Heck A.J."/>
            <person name="Mohammed S."/>
        </authorList>
    </citation>
    <scope>PHOSPHORYLATION [LARGE SCALE ANALYSIS] AT THR-232</scope>
    <scope>IDENTIFICATION BY MASS SPECTROMETRY [LARGE SCALE ANALYSIS]</scope>
    <source>
        <tissue>Erythroleukemia</tissue>
    </source>
</reference>
<reference key="13">
    <citation type="journal article" date="2017" name="Cell">
        <title>Assembly and function of heterotypic ubiquitin chains in cell-cycle and protein quality control.</title>
        <authorList>
            <person name="Yau R.G."/>
            <person name="Doerner K."/>
            <person name="Castellanos E.R."/>
            <person name="Haakonsen D.L."/>
            <person name="Werner A."/>
            <person name="Wang N."/>
            <person name="Yang X.W."/>
            <person name="Martinez-Martin N."/>
            <person name="Matsumoto M.L."/>
            <person name="Dixit V.M."/>
            <person name="Rape M."/>
        </authorList>
    </citation>
    <scope>FUNCTION</scope>
    <scope>PATHWAY</scope>
</reference>
<reference key="14">
    <citation type="journal article" date="2005" name="Mol. Cell">
        <title>Localization of the coactivator Cdh1 and the cullin subunit Apc2 in a cryo-electron microscopy model of vertebrate APC/C.</title>
        <authorList>
            <person name="Dube P."/>
            <person name="Herzog F."/>
            <person name="Gieffers C."/>
            <person name="Sander B."/>
            <person name="Riedel D."/>
            <person name="Mueller S.A."/>
            <person name="Engel A."/>
            <person name="Peters J.-M."/>
            <person name="Stark H."/>
        </authorList>
    </citation>
    <scope>ELECTRON MICROSCOPY OF THE APC/C</scope>
</reference>
<reference key="15">
    <citation type="journal article" date="2014" name="Nature">
        <title>Molecular architecture and mechanism of the anaphase-promoting complex.</title>
        <authorList>
            <person name="Chang L."/>
            <person name="Zhang Z."/>
            <person name="Yang J."/>
            <person name="McLaughlin S.H."/>
            <person name="Barford D."/>
        </authorList>
    </citation>
    <scope>STRUCTURE BY ELECTRON MICROSCOPY (7.4 ANGSTROMS) OF THE APC/C</scope>
    <scope>SUBUNIT</scope>
</reference>
<reference evidence="13 14" key="16">
    <citation type="journal article" date="2015" name="Nature">
        <title>Atomic structure of the APC/C and its mechanism of protein ubiquitination.</title>
        <authorList>
            <person name="Chang L."/>
            <person name="Zhang Z."/>
            <person name="Yang J."/>
            <person name="McLaughlin S.H."/>
            <person name="Barford D."/>
        </authorList>
    </citation>
    <scope>STRUCTURE BY ELECTRON MICROSCOPY (3.60 ANGSTROMS) OF APC/C</scope>
    <scope>SUBUNIT</scope>
</reference>
<reference key="17">
    <citation type="journal article" date="2006" name="Science">
        <title>The consensus coding sequences of human breast and colorectal cancers.</title>
        <authorList>
            <person name="Sjoeblom T."/>
            <person name="Jones S."/>
            <person name="Wood L.D."/>
            <person name="Parsons D.W."/>
            <person name="Lin J."/>
            <person name="Barber T.D."/>
            <person name="Mandelker D."/>
            <person name="Leary R.J."/>
            <person name="Ptak J."/>
            <person name="Silliman N."/>
            <person name="Szabo S."/>
            <person name="Buckhaults P."/>
            <person name="Farrell C."/>
            <person name="Meeh P."/>
            <person name="Markowitz S.D."/>
            <person name="Willis J."/>
            <person name="Dawson D."/>
            <person name="Willson J.K.V."/>
            <person name="Gazdar A.F."/>
            <person name="Hartigan J."/>
            <person name="Wu L."/>
            <person name="Liu C."/>
            <person name="Parmigiani G."/>
            <person name="Park B.H."/>
            <person name="Bachman K.E."/>
            <person name="Papadopoulos N."/>
            <person name="Vogelstein B."/>
            <person name="Kinzler K.W."/>
            <person name="Velculescu V.E."/>
        </authorList>
    </citation>
    <scope>VARIANT [LARGE SCALE ANALYSIS] HIS-617</scope>
</reference>
<dbReference type="EMBL" id="AF191339">
    <property type="protein sequence ID" value="AAF05753.1"/>
    <property type="molecule type" value="mRNA"/>
</dbReference>
<dbReference type="EMBL" id="AK025614">
    <property type="status" value="NOT_ANNOTATED_CDS"/>
    <property type="molecule type" value="mRNA"/>
</dbReference>
<dbReference type="EMBL" id="BX537687">
    <property type="protein sequence ID" value="CAD97812.1"/>
    <property type="molecule type" value="mRNA"/>
</dbReference>
<dbReference type="EMBL" id="AC048337">
    <property type="status" value="NOT_ANNOTATED_CDS"/>
    <property type="molecule type" value="Genomic_DNA"/>
</dbReference>
<dbReference type="EMBL" id="AC069209">
    <property type="status" value="NOT_ANNOTATED_CDS"/>
    <property type="molecule type" value="Genomic_DNA"/>
</dbReference>
<dbReference type="EMBL" id="BC001081">
    <property type="protein sequence ID" value="AAH01081.1"/>
    <property type="molecule type" value="mRNA"/>
</dbReference>
<dbReference type="EMBL" id="BC001950">
    <property type="protein sequence ID" value="AAH01950.1"/>
    <property type="molecule type" value="mRNA"/>
</dbReference>
<dbReference type="EMBL" id="BC006301">
    <property type="protein sequence ID" value="AAH06301.1"/>
    <property type="molecule type" value="mRNA"/>
</dbReference>
<dbReference type="EMBL" id="BC034243">
    <property type="protein sequence ID" value="AAH34243.1"/>
    <property type="molecule type" value="mRNA"/>
</dbReference>
<dbReference type="CCDS" id="CCDS45000.1">
    <molecule id="Q9UJX4-3"/>
</dbReference>
<dbReference type="CCDS" id="CCDS9220.1">
    <molecule id="Q9UJX4-1"/>
</dbReference>
<dbReference type="RefSeq" id="NP_001131031.1">
    <molecule id="Q9UJX4-3"/>
    <property type="nucleotide sequence ID" value="NM_001137559.1"/>
</dbReference>
<dbReference type="RefSeq" id="NP_001317418.1">
    <property type="nucleotide sequence ID" value="NM_001330489.1"/>
</dbReference>
<dbReference type="RefSeq" id="NP_057321.2">
    <molecule id="Q9UJX4-1"/>
    <property type="nucleotide sequence ID" value="NM_016237.4"/>
</dbReference>
<dbReference type="PDB" id="4UI9">
    <property type="method" value="EM"/>
    <property type="resolution" value="3.60 A"/>
    <property type="chains" value="O=1-755"/>
</dbReference>
<dbReference type="PDB" id="5A31">
    <property type="method" value="EM"/>
    <property type="resolution" value="4.30 A"/>
    <property type="chains" value="O=1-755"/>
</dbReference>
<dbReference type="PDB" id="5G04">
    <property type="method" value="EM"/>
    <property type="resolution" value="4.00 A"/>
    <property type="chains" value="O=1-755"/>
</dbReference>
<dbReference type="PDB" id="5G05">
    <property type="method" value="EM"/>
    <property type="resolution" value="3.40 A"/>
    <property type="chains" value="O=1-755"/>
</dbReference>
<dbReference type="PDB" id="5KHR">
    <property type="method" value="EM"/>
    <property type="resolution" value="6.10 A"/>
    <property type="chains" value="O=1-755"/>
</dbReference>
<dbReference type="PDB" id="5KHU">
    <property type="method" value="EM"/>
    <property type="resolution" value="4.80 A"/>
    <property type="chains" value="O=1-755"/>
</dbReference>
<dbReference type="PDB" id="5L9T">
    <property type="method" value="EM"/>
    <property type="resolution" value="6.40 A"/>
    <property type="chains" value="O=1-755"/>
</dbReference>
<dbReference type="PDB" id="5L9U">
    <property type="method" value="EM"/>
    <property type="resolution" value="6.40 A"/>
    <property type="chains" value="O=1-755"/>
</dbReference>
<dbReference type="PDB" id="5LCW">
    <property type="method" value="EM"/>
    <property type="resolution" value="4.00 A"/>
    <property type="chains" value="O=1-755"/>
</dbReference>
<dbReference type="PDB" id="6Q6G">
    <property type="method" value="EM"/>
    <property type="resolution" value="3.20 A"/>
    <property type="chains" value="O=1-755"/>
</dbReference>
<dbReference type="PDB" id="6Q6H">
    <property type="method" value="EM"/>
    <property type="resolution" value="3.20 A"/>
    <property type="chains" value="O=1-755"/>
</dbReference>
<dbReference type="PDB" id="6TLJ">
    <property type="method" value="EM"/>
    <property type="resolution" value="3.80 A"/>
    <property type="chains" value="O=1-755"/>
</dbReference>
<dbReference type="PDB" id="6TM5">
    <property type="method" value="EM"/>
    <property type="resolution" value="3.90 A"/>
    <property type="chains" value="O=1-755"/>
</dbReference>
<dbReference type="PDB" id="6TNT">
    <property type="method" value="EM"/>
    <property type="resolution" value="3.78 A"/>
    <property type="chains" value="O=1-755"/>
</dbReference>
<dbReference type="PDB" id="8PKP">
    <property type="method" value="EM"/>
    <property type="resolution" value="3.20 A"/>
    <property type="chains" value="O=1-755"/>
</dbReference>
<dbReference type="PDB" id="8TAR">
    <property type="method" value="EM"/>
    <property type="resolution" value="4.00 A"/>
    <property type="chains" value="O=1-755"/>
</dbReference>
<dbReference type="PDB" id="8TAU">
    <property type="method" value="EM"/>
    <property type="resolution" value="3.50 A"/>
    <property type="chains" value="O=1-755"/>
</dbReference>
<dbReference type="PDB" id="9GAW">
    <property type="method" value="EM"/>
    <property type="resolution" value="2.90 A"/>
    <property type="chains" value="O=1-755"/>
</dbReference>
<dbReference type="PDBsum" id="4UI9"/>
<dbReference type="PDBsum" id="5A31"/>
<dbReference type="PDBsum" id="5G04"/>
<dbReference type="PDBsum" id="5G05"/>
<dbReference type="PDBsum" id="5KHR"/>
<dbReference type="PDBsum" id="5KHU"/>
<dbReference type="PDBsum" id="5L9T"/>
<dbReference type="PDBsum" id="5L9U"/>
<dbReference type="PDBsum" id="5LCW"/>
<dbReference type="PDBsum" id="6Q6G"/>
<dbReference type="PDBsum" id="6Q6H"/>
<dbReference type="PDBsum" id="6TLJ"/>
<dbReference type="PDBsum" id="6TM5"/>
<dbReference type="PDBsum" id="6TNT"/>
<dbReference type="PDBsum" id="8PKP"/>
<dbReference type="PDBsum" id="8TAR"/>
<dbReference type="PDBsum" id="8TAU"/>
<dbReference type="PDBsum" id="9GAW"/>
<dbReference type="EMDB" id="EMD-10516"/>
<dbReference type="EMDB" id="EMD-10518"/>
<dbReference type="EMDB" id="EMD-10536"/>
<dbReference type="EMDB" id="EMD-13931"/>
<dbReference type="EMDB" id="EMD-17751"/>
<dbReference type="EMDB" id="EMD-19711"/>
<dbReference type="EMDB" id="EMD-2924"/>
<dbReference type="EMDB" id="EMD-2925"/>
<dbReference type="EMDB" id="EMD-3385"/>
<dbReference type="EMDB" id="EMD-3386"/>
<dbReference type="EMDB" id="EMD-3387"/>
<dbReference type="EMDB" id="EMD-3388"/>
<dbReference type="EMDB" id="EMD-3389"/>
<dbReference type="EMDB" id="EMD-3390"/>
<dbReference type="EMDB" id="EMD-4037"/>
<dbReference type="EMDB" id="EMD-41140"/>
<dbReference type="EMDB" id="EMD-41142"/>
<dbReference type="EMDB" id="EMD-4465"/>
<dbReference type="EMDB" id="EMD-4466"/>
<dbReference type="EMDB" id="EMD-4467"/>
<dbReference type="EMDB" id="EMD-51190"/>
<dbReference type="SMR" id="Q9UJX4"/>
<dbReference type="BioGRID" id="119537">
    <property type="interactions" value="186"/>
</dbReference>
<dbReference type="ComplexPortal" id="CPX-1860">
    <property type="entry name" value="Anaphase-promoting core complex"/>
</dbReference>
<dbReference type="CORUM" id="Q9UJX4"/>
<dbReference type="DIP" id="DIP-32945N"/>
<dbReference type="FunCoup" id="Q9UJX4">
    <property type="interactions" value="3767"/>
</dbReference>
<dbReference type="IntAct" id="Q9UJX4">
    <property type="interactions" value="95"/>
</dbReference>
<dbReference type="MINT" id="Q9UJX4"/>
<dbReference type="STRING" id="9606.ENSP00000261819"/>
<dbReference type="iPTMnet" id="Q9UJX4"/>
<dbReference type="MetOSite" id="Q9UJX4"/>
<dbReference type="PhosphoSitePlus" id="Q9UJX4"/>
<dbReference type="SwissPalm" id="Q9UJX4"/>
<dbReference type="BioMuta" id="ANAPC5"/>
<dbReference type="DMDM" id="37537861"/>
<dbReference type="jPOST" id="Q9UJX4"/>
<dbReference type="MassIVE" id="Q9UJX4"/>
<dbReference type="PaxDb" id="9606-ENSP00000261819"/>
<dbReference type="PeptideAtlas" id="Q9UJX4"/>
<dbReference type="ProteomicsDB" id="20064"/>
<dbReference type="ProteomicsDB" id="84684">
    <molecule id="Q9UJX4-1"/>
</dbReference>
<dbReference type="ProteomicsDB" id="84685">
    <molecule id="Q9UJX4-2"/>
</dbReference>
<dbReference type="Pumba" id="Q9UJX4"/>
<dbReference type="Antibodypedia" id="31562">
    <property type="antibodies" value="364 antibodies from 37 providers"/>
</dbReference>
<dbReference type="DNASU" id="51433"/>
<dbReference type="Ensembl" id="ENST00000261819.8">
    <molecule id="Q9UJX4-1"/>
    <property type="protein sequence ID" value="ENSP00000261819.3"/>
    <property type="gene ID" value="ENSG00000089053.13"/>
</dbReference>
<dbReference type="Ensembl" id="ENST00000441917.6">
    <molecule id="Q9UJX4-3"/>
    <property type="protein sequence ID" value="ENSP00000415061.2"/>
    <property type="gene ID" value="ENSG00000089053.13"/>
</dbReference>
<dbReference type="GeneID" id="51433"/>
<dbReference type="KEGG" id="hsa:51433"/>
<dbReference type="MANE-Select" id="ENST00000261819.8">
    <property type="protein sequence ID" value="ENSP00000261819.3"/>
    <property type="RefSeq nucleotide sequence ID" value="NM_016237.5"/>
    <property type="RefSeq protein sequence ID" value="NP_057321.2"/>
</dbReference>
<dbReference type="UCSC" id="uc001uag.4">
    <molecule id="Q9UJX4-1"/>
    <property type="organism name" value="human"/>
</dbReference>
<dbReference type="AGR" id="HGNC:15713"/>
<dbReference type="CTD" id="51433"/>
<dbReference type="DisGeNET" id="51433"/>
<dbReference type="GeneCards" id="ANAPC5"/>
<dbReference type="HGNC" id="HGNC:15713">
    <property type="gene designation" value="ANAPC5"/>
</dbReference>
<dbReference type="HPA" id="ENSG00000089053">
    <property type="expression patterns" value="Low tissue specificity"/>
</dbReference>
<dbReference type="MIM" id="606948">
    <property type="type" value="gene"/>
</dbReference>
<dbReference type="neXtProt" id="NX_Q9UJX4"/>
<dbReference type="OpenTargets" id="ENSG00000089053"/>
<dbReference type="PharmGKB" id="PA24788"/>
<dbReference type="VEuPathDB" id="HostDB:ENSG00000089053"/>
<dbReference type="eggNOG" id="KOG4322">
    <property type="taxonomic scope" value="Eukaryota"/>
</dbReference>
<dbReference type="GeneTree" id="ENSGT00390000018674"/>
<dbReference type="HOGENOM" id="CLU_020635_0_0_1"/>
<dbReference type="InParanoid" id="Q9UJX4"/>
<dbReference type="OMA" id="DANMGMA"/>
<dbReference type="OrthoDB" id="2504561at2759"/>
<dbReference type="PAN-GO" id="Q9UJX4">
    <property type="GO annotations" value="4 GO annotations based on evolutionary models"/>
</dbReference>
<dbReference type="PhylomeDB" id="Q9UJX4"/>
<dbReference type="TreeFam" id="TF105444"/>
<dbReference type="PathwayCommons" id="Q9UJX4"/>
<dbReference type="Reactome" id="R-HSA-141430">
    <property type="pathway name" value="Inactivation of APC/C via direct inhibition of the APC/C complex"/>
</dbReference>
<dbReference type="Reactome" id="R-HSA-174048">
    <property type="pathway name" value="APC/C:Cdc20 mediated degradation of Cyclin B"/>
</dbReference>
<dbReference type="Reactome" id="R-HSA-174084">
    <property type="pathway name" value="Autodegradation of Cdh1 by Cdh1:APC/C"/>
</dbReference>
<dbReference type="Reactome" id="R-HSA-174154">
    <property type="pathway name" value="APC/C:Cdc20 mediated degradation of Securin"/>
</dbReference>
<dbReference type="Reactome" id="R-HSA-174178">
    <property type="pathway name" value="APC/C:Cdh1 mediated degradation of Cdc20 and other APC/C:Cdh1 targeted proteins in late mitosis/early G1"/>
</dbReference>
<dbReference type="Reactome" id="R-HSA-174184">
    <property type="pathway name" value="Cdc20:Phospho-APC/C mediated degradation of Cyclin A"/>
</dbReference>
<dbReference type="Reactome" id="R-HSA-176407">
    <property type="pathway name" value="Conversion from APC/C:Cdc20 to APC/C:Cdh1 in late anaphase"/>
</dbReference>
<dbReference type="Reactome" id="R-HSA-176408">
    <property type="pathway name" value="Regulation of APC/C activators between G1/S and early anaphase"/>
</dbReference>
<dbReference type="Reactome" id="R-HSA-176409">
    <property type="pathway name" value="APC/C:Cdc20 mediated degradation of mitotic proteins"/>
</dbReference>
<dbReference type="Reactome" id="R-HSA-176412">
    <property type="pathway name" value="Phosphorylation of the APC/C"/>
</dbReference>
<dbReference type="Reactome" id="R-HSA-179409">
    <property type="pathway name" value="APC-Cdc20 mediated degradation of Nek2A"/>
</dbReference>
<dbReference type="Reactome" id="R-HSA-2467813">
    <property type="pathway name" value="Separation of Sister Chromatids"/>
</dbReference>
<dbReference type="Reactome" id="R-HSA-2559582">
    <property type="pathway name" value="Senescence-Associated Secretory Phenotype (SASP)"/>
</dbReference>
<dbReference type="Reactome" id="R-HSA-68867">
    <property type="pathway name" value="Assembly of the pre-replicative complex"/>
</dbReference>
<dbReference type="Reactome" id="R-HSA-69017">
    <property type="pathway name" value="CDK-mediated phosphorylation and removal of Cdc6"/>
</dbReference>
<dbReference type="Reactome" id="R-HSA-8853884">
    <property type="pathway name" value="Transcriptional Regulation by VENTX"/>
</dbReference>
<dbReference type="Reactome" id="R-HSA-9687136">
    <property type="pathway name" value="Aberrant regulation of mitotic exit in cancer due to RB1 defects"/>
</dbReference>
<dbReference type="Reactome" id="R-HSA-983168">
    <property type="pathway name" value="Antigen processing: Ubiquitination &amp; Proteasome degradation"/>
</dbReference>
<dbReference type="SignaLink" id="Q9UJX4"/>
<dbReference type="SIGNOR" id="Q9UJX4"/>
<dbReference type="UniPathway" id="UPA00143"/>
<dbReference type="BioGRID-ORCS" id="51433">
    <property type="hits" value="775 hits in 1175 CRISPR screens"/>
</dbReference>
<dbReference type="ChiTaRS" id="ANAPC5">
    <property type="organism name" value="human"/>
</dbReference>
<dbReference type="EvolutionaryTrace" id="Q9UJX4"/>
<dbReference type="GeneWiki" id="ANAPC5"/>
<dbReference type="GenomeRNAi" id="51433"/>
<dbReference type="Pharos" id="Q9UJX4">
    <property type="development level" value="Tbio"/>
</dbReference>
<dbReference type="PRO" id="PR:Q9UJX4"/>
<dbReference type="Proteomes" id="UP000005640">
    <property type="component" value="Chromosome 12"/>
</dbReference>
<dbReference type="RNAct" id="Q9UJX4">
    <property type="molecule type" value="protein"/>
</dbReference>
<dbReference type="Bgee" id="ENSG00000089053">
    <property type="expression patterns" value="Expressed in right uterine tube and 215 other cell types or tissues"/>
</dbReference>
<dbReference type="ExpressionAtlas" id="Q9UJX4">
    <property type="expression patterns" value="baseline and differential"/>
</dbReference>
<dbReference type="GO" id="GO:0005680">
    <property type="term" value="C:anaphase-promoting complex"/>
    <property type="evidence" value="ECO:0000314"/>
    <property type="project" value="UniProtKB"/>
</dbReference>
<dbReference type="GO" id="GO:0005829">
    <property type="term" value="C:cytosol"/>
    <property type="evidence" value="ECO:0000304"/>
    <property type="project" value="Reactome"/>
</dbReference>
<dbReference type="GO" id="GO:0005654">
    <property type="term" value="C:nucleoplasm"/>
    <property type="evidence" value="ECO:0000304"/>
    <property type="project" value="Reactome"/>
</dbReference>
<dbReference type="GO" id="GO:0005634">
    <property type="term" value="C:nucleus"/>
    <property type="evidence" value="ECO:0000314"/>
    <property type="project" value="UniProtKB"/>
</dbReference>
<dbReference type="GO" id="GO:0005819">
    <property type="term" value="C:spindle"/>
    <property type="evidence" value="ECO:0000314"/>
    <property type="project" value="UniProtKB"/>
</dbReference>
<dbReference type="GO" id="GO:0019903">
    <property type="term" value="F:protein phosphatase binding"/>
    <property type="evidence" value="ECO:0000353"/>
    <property type="project" value="BHF-UCL"/>
</dbReference>
<dbReference type="GO" id="GO:0031145">
    <property type="term" value="P:anaphase-promoting complex-dependent catabolic process"/>
    <property type="evidence" value="ECO:0000314"/>
    <property type="project" value="UniProtKB"/>
</dbReference>
<dbReference type="GO" id="GO:0051301">
    <property type="term" value="P:cell division"/>
    <property type="evidence" value="ECO:0007669"/>
    <property type="project" value="UniProtKB-KW"/>
</dbReference>
<dbReference type="GO" id="GO:0045842">
    <property type="term" value="P:positive regulation of mitotic metaphase/anaphase transition"/>
    <property type="evidence" value="ECO:0000318"/>
    <property type="project" value="GO_Central"/>
</dbReference>
<dbReference type="GO" id="GO:0141198">
    <property type="term" value="P:protein branched polyubiquitination"/>
    <property type="evidence" value="ECO:0000314"/>
    <property type="project" value="UniProtKB"/>
</dbReference>
<dbReference type="GO" id="GO:0070979">
    <property type="term" value="P:protein K11-linked ubiquitination"/>
    <property type="evidence" value="ECO:0000314"/>
    <property type="project" value="UniProtKB"/>
</dbReference>
<dbReference type="GO" id="GO:0070936">
    <property type="term" value="P:protein K48-linked ubiquitination"/>
    <property type="evidence" value="ECO:0000314"/>
    <property type="project" value="UniProtKB"/>
</dbReference>
<dbReference type="GO" id="GO:0051445">
    <property type="term" value="P:regulation of meiotic cell cycle"/>
    <property type="evidence" value="ECO:0000303"/>
    <property type="project" value="ComplexPortal"/>
</dbReference>
<dbReference type="GO" id="GO:0007346">
    <property type="term" value="P:regulation of mitotic cell cycle"/>
    <property type="evidence" value="ECO:0000303"/>
    <property type="project" value="ComplexPortal"/>
</dbReference>
<dbReference type="CDD" id="cd16270">
    <property type="entry name" value="Apc5_N"/>
    <property type="match status" value="1"/>
</dbReference>
<dbReference type="DisProt" id="DP01443"/>
<dbReference type="FunFam" id="1.25.40.10:FF:000127">
    <property type="entry name" value="anaphase-promoting complex subunit 5 isoform X1"/>
    <property type="match status" value="1"/>
</dbReference>
<dbReference type="Gene3D" id="1.25.40.10">
    <property type="entry name" value="Tetratricopeptide repeat domain"/>
    <property type="match status" value="1"/>
</dbReference>
<dbReference type="InterPro" id="IPR037679">
    <property type="entry name" value="Apc5"/>
</dbReference>
<dbReference type="InterPro" id="IPR026000">
    <property type="entry name" value="Apc5_dom"/>
</dbReference>
<dbReference type="InterPro" id="IPR048968">
    <property type="entry name" value="Apc5_N"/>
</dbReference>
<dbReference type="InterPro" id="IPR011990">
    <property type="entry name" value="TPR-like_helical_dom_sf"/>
</dbReference>
<dbReference type="InterPro" id="IPR019734">
    <property type="entry name" value="TPR_rpt"/>
</dbReference>
<dbReference type="PANTHER" id="PTHR12830">
    <property type="entry name" value="ANAPHASE-PROMOTING COMPLEX SUBUNIT 5"/>
    <property type="match status" value="1"/>
</dbReference>
<dbReference type="PANTHER" id="PTHR12830:SF9">
    <property type="entry name" value="ANAPHASE-PROMOTING COMPLEX SUBUNIT 5"/>
    <property type="match status" value="1"/>
</dbReference>
<dbReference type="Pfam" id="PF12862">
    <property type="entry name" value="ANAPC5"/>
    <property type="match status" value="2"/>
</dbReference>
<dbReference type="Pfam" id="PF21371">
    <property type="entry name" value="Apc5_N"/>
    <property type="match status" value="1"/>
</dbReference>
<dbReference type="SMART" id="SM00028">
    <property type="entry name" value="TPR"/>
    <property type="match status" value="4"/>
</dbReference>
<dbReference type="SUPFAM" id="SSF48452">
    <property type="entry name" value="TPR-like"/>
    <property type="match status" value="2"/>
</dbReference>
<comment type="function">
    <text evidence="4 8">Component of the anaphase promoting complex/cyclosome (APC/C), a cell cycle-regulated E3 ubiquitin ligase that controls progression through mitosis and the G1 phase of the cell cycle (PubMed:18485873). The APC/C complex acts by mediating ubiquitination and subsequent degradation of target proteins: it mainly mediates the formation of 'Lys-11'-linked polyubiquitin chains and, to a lower extent, the formation of 'Lys-48'- and 'Lys-63'-linked polyubiquitin chains (PubMed:18485873). The APC/C complex catalyzes assembly of branched 'Lys-11'-/'Lys-48'-linked branched ubiquitin chains on target proteins (PubMed:29033132).</text>
</comment>
<comment type="pathway">
    <text evidence="8">Protein modification; protein ubiquitination.</text>
</comment>
<comment type="subunit">
    <text evidence="6 7 9">The mammalian APC/C is composed at least of 14 distinct subunits ANAPC1, ANAPC2, CDC27/APC3, ANAPC4, ANAPC5, CDC16/APC6, ANAPC7, CDC23/APC8, ANAPC10, ANAPC11, CDC26/APC12, ANAPC13, ANAPC15 and ANAPC16 that assemble into a complex of at least 19 chains with a combined molecular mass of around 1.2 MDa; APC/C interacts with FZR1 and FBXO5.</text>
</comment>
<comment type="subcellular location">
    <subcellularLocation>
        <location evidence="3">Nucleus</location>
    </subcellularLocation>
    <subcellularLocation>
        <location evidence="3">Cytoplasm</location>
        <location evidence="3">Cytoskeleton</location>
        <location evidence="3">Spindle</location>
    </subcellularLocation>
</comment>
<comment type="alternative products">
    <event type="alternative splicing"/>
    <isoform>
        <id>Q9UJX4-1</id>
        <name>1</name>
        <sequence type="displayed"/>
    </isoform>
    <isoform>
        <id>Q9UJX4-2</id>
        <name>2</name>
        <sequence type="described" ref="VSP_008466 VSP_008467 VSP_008468 VSP_008469"/>
    </isoform>
    <isoform>
        <id>Q9UJX4-3</id>
        <name>3</name>
        <sequence type="described" ref="VSP_044878 VSP_044879"/>
    </isoform>
</comment>
<comment type="domain">
    <text evidence="5">The TPR repeats are six to seven residues longer than a canonical TPR motif.</text>
</comment>
<comment type="similarity">
    <text evidence="12">Belongs to the APC5 family.</text>
</comment>
<feature type="chain" id="PRO_0000064597" description="Anaphase-promoting complex subunit 5">
    <location>
        <begin position="1"/>
        <end position="755"/>
    </location>
</feature>
<feature type="repeat" description="TPR 1">
    <location>
        <begin position="209"/>
        <end position="249"/>
    </location>
</feature>
<feature type="repeat" description="TPR 2">
    <location>
        <begin position="250"/>
        <end position="300"/>
    </location>
</feature>
<feature type="repeat" description="TPR 3">
    <location>
        <begin position="301"/>
        <end position="337"/>
    </location>
</feature>
<feature type="repeat" description="TPR 4">
    <location>
        <begin position="338"/>
        <end position="378"/>
    </location>
</feature>
<feature type="repeat" description="TPR 5">
    <location>
        <begin position="379"/>
        <end position="418"/>
    </location>
</feature>
<feature type="repeat" description="TPR 6">
    <location>
        <begin position="419"/>
        <end position="466"/>
    </location>
</feature>
<feature type="repeat" description="TPR 7">
    <location>
        <begin position="467"/>
        <end position="500"/>
    </location>
</feature>
<feature type="repeat" description="TPR 8">
    <location>
        <begin position="501"/>
        <end position="540"/>
    </location>
</feature>
<feature type="repeat" description="TPR 9">
    <location>
        <begin position="541"/>
        <end position="580"/>
    </location>
</feature>
<feature type="repeat" description="TPR 10">
    <location>
        <begin position="581"/>
        <end position="620"/>
    </location>
</feature>
<feature type="repeat" description="TPR 11">
    <location>
        <begin position="621"/>
        <end position="660"/>
    </location>
</feature>
<feature type="repeat" description="TPR 12">
    <location>
        <begin position="661"/>
        <end position="696"/>
    </location>
</feature>
<feature type="repeat" description="TPR 13">
    <location>
        <begin position="697"/>
        <end position="736"/>
    </location>
</feature>
<feature type="modified residue" description="Phosphoserine" evidence="1">
    <location>
        <position position="195"/>
    </location>
</feature>
<feature type="modified residue" description="Phosphothreonine" evidence="15">
    <location>
        <position position="232"/>
    </location>
</feature>
<feature type="splice variant" id="VSP_008466" description="In isoform 2." evidence="11">
    <location>
        <begin position="1"/>
        <end position="121"/>
    </location>
</feature>
<feature type="splice variant" id="VSP_044878" description="In isoform 3." evidence="10">
    <location>
        <begin position="1"/>
        <end position="99"/>
    </location>
</feature>
<feature type="splice variant" id="VSP_008467" description="In isoform 2." evidence="11">
    <original>TEPEVHKTSV</original>
    <variation>MLSPCLSSYF</variation>
    <location>
        <begin position="122"/>
        <end position="131"/>
    </location>
</feature>
<feature type="splice variant" id="VSP_008468" description="In isoform 2." evidence="11">
    <original>QQAELALQEAIRIAQESNDHVCL</original>
    <variation>TSPPWEYSPLFNRELLLGRRQTS</variation>
    <location>
        <begin position="318"/>
        <end position="340"/>
    </location>
</feature>
<feature type="splice variant" id="VSP_008469" description="In isoform 2." evidence="11">
    <location>
        <begin position="341"/>
        <end position="755"/>
    </location>
</feature>
<feature type="splice variant" id="VSP_044879" description="In isoform 3." evidence="10">
    <location>
        <begin position="375"/>
        <end position="387"/>
    </location>
</feature>
<feature type="sequence variant" id="VAR_035793" description="In a breast cancer sample; somatic mutation." evidence="2">
    <original>Q</original>
    <variation>H</variation>
    <location>
        <position position="617"/>
    </location>
</feature>
<feature type="sequence conflict" description="In Ref. 1; AAF05753." evidence="12" ref="1">
    <original>F</original>
    <variation>L</variation>
    <location>
        <position position="24"/>
    </location>
</feature>
<feature type="turn" evidence="17">
    <location>
        <begin position="17"/>
        <end position="19"/>
    </location>
</feature>
<feature type="helix" evidence="18">
    <location>
        <begin position="32"/>
        <end position="45"/>
    </location>
</feature>
<feature type="strand" evidence="16">
    <location>
        <begin position="47"/>
        <end position="49"/>
    </location>
</feature>
<feature type="helix" evidence="18">
    <location>
        <begin position="55"/>
        <end position="69"/>
    </location>
</feature>
<feature type="helix" evidence="18">
    <location>
        <begin position="75"/>
        <end position="85"/>
    </location>
</feature>
<feature type="helix" evidence="18">
    <location>
        <begin position="87"/>
        <end position="102"/>
    </location>
</feature>
<feature type="helix" evidence="18">
    <location>
        <begin position="105"/>
        <end position="117"/>
    </location>
</feature>
<feature type="strand" evidence="18">
    <location>
        <begin position="121"/>
        <end position="123"/>
    </location>
</feature>
<feature type="strand" evidence="16">
    <location>
        <begin position="128"/>
        <end position="130"/>
    </location>
</feature>
<feature type="helix" evidence="18">
    <location>
        <begin position="131"/>
        <end position="144"/>
    </location>
</feature>
<feature type="helix" evidence="18">
    <location>
        <begin position="148"/>
        <end position="166"/>
    </location>
</feature>
<feature type="helix" evidence="18">
    <location>
        <begin position="209"/>
        <end position="225"/>
    </location>
</feature>
<feature type="turn" evidence="18">
    <location>
        <begin position="227"/>
        <end position="229"/>
    </location>
</feature>
<feature type="helix" evidence="18">
    <location>
        <begin position="233"/>
        <end position="246"/>
    </location>
</feature>
<feature type="helix" evidence="18">
    <location>
        <begin position="251"/>
        <end position="263"/>
    </location>
</feature>
<feature type="helix" evidence="18">
    <location>
        <begin position="267"/>
        <end position="280"/>
    </location>
</feature>
<feature type="helix" evidence="18">
    <location>
        <begin position="289"/>
        <end position="291"/>
    </location>
</feature>
<feature type="helix" evidence="18">
    <location>
        <begin position="299"/>
        <end position="314"/>
    </location>
</feature>
<feature type="helix" evidence="18">
    <location>
        <begin position="317"/>
        <end position="333"/>
    </location>
</feature>
<feature type="helix" evidence="18">
    <location>
        <begin position="337"/>
        <end position="350"/>
    </location>
</feature>
<feature type="turn" evidence="16">
    <location>
        <begin position="351"/>
        <end position="353"/>
    </location>
</feature>
<feature type="strand" evidence="16">
    <location>
        <begin position="354"/>
        <end position="356"/>
    </location>
</feature>
<feature type="helix" evidence="18">
    <location>
        <begin position="358"/>
        <end position="369"/>
    </location>
</feature>
<feature type="strand" evidence="16">
    <location>
        <begin position="370"/>
        <end position="372"/>
    </location>
</feature>
<feature type="helix" evidence="18">
    <location>
        <begin position="374"/>
        <end position="391"/>
    </location>
</feature>
<feature type="helix" evidence="18">
    <location>
        <begin position="395"/>
        <end position="411"/>
    </location>
</feature>
<feature type="helix" evidence="18">
    <location>
        <begin position="415"/>
        <end position="431"/>
    </location>
</feature>
<feature type="helix" evidence="18">
    <location>
        <begin position="435"/>
        <end position="446"/>
    </location>
</feature>
<feature type="helix" evidence="18">
    <location>
        <begin position="464"/>
        <end position="479"/>
    </location>
</feature>
<feature type="helix" evidence="18">
    <location>
        <begin position="483"/>
        <end position="496"/>
    </location>
</feature>
<feature type="helix" evidence="18">
    <location>
        <begin position="504"/>
        <end position="521"/>
    </location>
</feature>
<feature type="helix" evidence="18">
    <location>
        <begin position="525"/>
        <end position="538"/>
    </location>
</feature>
<feature type="helix" evidence="18">
    <location>
        <begin position="540"/>
        <end position="553"/>
    </location>
</feature>
<feature type="helix" evidence="18">
    <location>
        <begin position="557"/>
        <end position="574"/>
    </location>
</feature>
<feature type="helix" evidence="18">
    <location>
        <begin position="577"/>
        <end position="591"/>
    </location>
</feature>
<feature type="helix" evidence="18">
    <location>
        <begin position="597"/>
        <end position="600"/>
    </location>
</feature>
<feature type="helix" evidence="18">
    <location>
        <begin position="601"/>
        <end position="614"/>
    </location>
</feature>
<feature type="helix" evidence="18">
    <location>
        <begin position="617"/>
        <end position="634"/>
    </location>
</feature>
<feature type="helix" evidence="18">
    <location>
        <begin position="637"/>
        <end position="647"/>
    </location>
</feature>
<feature type="helix" evidence="18">
    <location>
        <begin position="649"/>
        <end position="653"/>
    </location>
</feature>
<feature type="helix" evidence="18">
    <location>
        <begin position="657"/>
        <end position="674"/>
    </location>
</feature>
<feature type="helix" evidence="18">
    <location>
        <begin position="675"/>
        <end position="677"/>
    </location>
</feature>
<feature type="helix" evidence="18">
    <location>
        <begin position="680"/>
        <end position="704"/>
    </location>
</feature>
<feature type="helix" evidence="18">
    <location>
        <begin position="707"/>
        <end position="724"/>
    </location>
</feature>
<feature type="helix" evidence="18">
    <location>
        <begin position="727"/>
        <end position="741"/>
    </location>
</feature>
<feature type="turn" evidence="18">
    <location>
        <begin position="750"/>
        <end position="752"/>
    </location>
</feature>
<evidence type="ECO:0000269" key="1">
    <source>
    </source>
</evidence>
<evidence type="ECO:0000269" key="2">
    <source>
    </source>
</evidence>
<evidence type="ECO:0000269" key="3">
    <source>
    </source>
</evidence>
<evidence type="ECO:0000269" key="4">
    <source>
    </source>
</evidence>
<evidence type="ECO:0000269" key="5">
    <source>
    </source>
</evidence>
<evidence type="ECO:0000269" key="6">
    <source>
    </source>
</evidence>
<evidence type="ECO:0000269" key="7">
    <source>
    </source>
</evidence>
<evidence type="ECO:0000269" key="8">
    <source>
    </source>
</evidence>
<evidence type="ECO:0000269" key="9">
    <source>
    </source>
</evidence>
<evidence type="ECO:0000303" key="10">
    <source>
    </source>
</evidence>
<evidence type="ECO:0000303" key="11">
    <source>
    </source>
</evidence>
<evidence type="ECO:0000305" key="12"/>
<evidence type="ECO:0007744" key="13">
    <source>
        <dbReference type="PDB" id="4UI9"/>
    </source>
</evidence>
<evidence type="ECO:0007744" key="14">
    <source>
        <dbReference type="PDB" id="5A31"/>
    </source>
</evidence>
<evidence type="ECO:0007744" key="15">
    <source>
    </source>
</evidence>
<evidence type="ECO:0007829" key="16">
    <source>
        <dbReference type="PDB" id="6Q6G"/>
    </source>
</evidence>
<evidence type="ECO:0007829" key="17">
    <source>
        <dbReference type="PDB" id="8TAU"/>
    </source>
</evidence>
<evidence type="ECO:0007829" key="18">
    <source>
        <dbReference type="PDB" id="9GAW"/>
    </source>
</evidence>